<gene>
    <name evidence="2" type="primary">arcB</name>
    <name type="ordered locus">JJD26997_0795</name>
</gene>
<reference key="1">
    <citation type="submission" date="2007-07" db="EMBL/GenBank/DDBJ databases">
        <title>Complete genome sequence of Campylobacter jejuni subsp doylei 269.97 isolated from human blood.</title>
        <authorList>
            <person name="Fouts D.E."/>
            <person name="Mongodin E.F."/>
            <person name="Puiu D."/>
            <person name="Sebastian Y."/>
            <person name="Miller W.G."/>
            <person name="Mandrell R.E."/>
            <person name="Lastovica A.J."/>
            <person name="Nelson K.E."/>
        </authorList>
    </citation>
    <scope>NUCLEOTIDE SEQUENCE [LARGE SCALE GENOMIC DNA]</scope>
    <source>
        <strain>ATCC BAA-1458 / RM4099 / 269.97</strain>
    </source>
</reference>
<evidence type="ECO:0000250" key="1"/>
<evidence type="ECO:0000255" key="2">
    <source>
        <dbReference type="HAMAP-Rule" id="MF_01109"/>
    </source>
</evidence>
<sequence>MKHFLTLRDFSKEEILSLVNHASELKKEPKKLLQDKTLAMIFEKNSTRTRMAFELAITELGGKALFLSSNDLQLSRGEPVKDTARVIGAMVDFIMMRVNKHENLLEFARYSKAPVINALSELYHPTQVLGDLLTIKEWNKIQNGIAKVAFIGDSNNMCNSWLIAAAILGFEFSIAIPKNYEINPEIWDFAMKQALISGAKISLSHDKFKALKDKDVVITDTWVSMGEENEKERKIKEFEEFMIDEKAMSVANEDAILLHCLPAYRGYEVSEEIFEKHADVIFEEARNRLYVVKALLCFLDNQRGRK</sequence>
<name>OTC_CAMJD</name>
<protein>
    <recommendedName>
        <fullName evidence="2">Ornithine carbamoyltransferase</fullName>
        <shortName evidence="2">OTCase</shortName>
        <ecNumber evidence="2">2.1.3.3</ecNumber>
    </recommendedName>
</protein>
<comment type="function">
    <text evidence="1">Reversibly catalyzes the transfer of the carbamoyl group from carbamoyl phosphate (CP) to the N(epsilon) atom of ornithine (ORN) to produce L-citrulline.</text>
</comment>
<comment type="catalytic activity">
    <reaction evidence="2">
        <text>carbamoyl phosphate + L-ornithine = L-citrulline + phosphate + H(+)</text>
        <dbReference type="Rhea" id="RHEA:19513"/>
        <dbReference type="ChEBI" id="CHEBI:15378"/>
        <dbReference type="ChEBI" id="CHEBI:43474"/>
        <dbReference type="ChEBI" id="CHEBI:46911"/>
        <dbReference type="ChEBI" id="CHEBI:57743"/>
        <dbReference type="ChEBI" id="CHEBI:58228"/>
        <dbReference type="EC" id="2.1.3.3"/>
    </reaction>
</comment>
<comment type="pathway">
    <text evidence="2">Amino-acid degradation; L-arginine degradation via ADI pathway; carbamoyl phosphate from L-arginine: step 2/2.</text>
</comment>
<comment type="subcellular location">
    <subcellularLocation>
        <location evidence="2">Cytoplasm</location>
    </subcellularLocation>
</comment>
<comment type="similarity">
    <text evidence="2">Belongs to the aspartate/ornithine carbamoyltransferase superfamily. OTCase family.</text>
</comment>
<proteinExistence type="inferred from homology"/>
<feature type="chain" id="PRO_1000084840" description="Ornithine carbamoyltransferase">
    <location>
        <begin position="1"/>
        <end position="306"/>
    </location>
</feature>
<feature type="binding site" evidence="2">
    <location>
        <begin position="46"/>
        <end position="49"/>
    </location>
    <ligand>
        <name>carbamoyl phosphate</name>
        <dbReference type="ChEBI" id="CHEBI:58228"/>
    </ligand>
</feature>
<feature type="binding site" evidence="2">
    <location>
        <position position="73"/>
    </location>
    <ligand>
        <name>carbamoyl phosphate</name>
        <dbReference type="ChEBI" id="CHEBI:58228"/>
    </ligand>
</feature>
<feature type="binding site" evidence="2">
    <location>
        <position position="97"/>
    </location>
    <ligand>
        <name>carbamoyl phosphate</name>
        <dbReference type="ChEBI" id="CHEBI:58228"/>
    </ligand>
</feature>
<feature type="binding site" evidence="2">
    <location>
        <begin position="124"/>
        <end position="127"/>
    </location>
    <ligand>
        <name>carbamoyl phosphate</name>
        <dbReference type="ChEBI" id="CHEBI:58228"/>
    </ligand>
</feature>
<feature type="binding site" evidence="2">
    <location>
        <position position="156"/>
    </location>
    <ligand>
        <name>L-ornithine</name>
        <dbReference type="ChEBI" id="CHEBI:46911"/>
    </ligand>
</feature>
<feature type="binding site" evidence="2">
    <location>
        <position position="220"/>
    </location>
    <ligand>
        <name>L-ornithine</name>
        <dbReference type="ChEBI" id="CHEBI:46911"/>
    </ligand>
</feature>
<feature type="binding site" evidence="2">
    <location>
        <begin position="224"/>
        <end position="225"/>
    </location>
    <ligand>
        <name>L-ornithine</name>
        <dbReference type="ChEBI" id="CHEBI:46911"/>
    </ligand>
</feature>
<feature type="binding site" evidence="2">
    <location>
        <begin position="260"/>
        <end position="261"/>
    </location>
    <ligand>
        <name>carbamoyl phosphate</name>
        <dbReference type="ChEBI" id="CHEBI:58228"/>
    </ligand>
</feature>
<feature type="binding site" evidence="2">
    <location>
        <position position="288"/>
    </location>
    <ligand>
        <name>carbamoyl phosphate</name>
        <dbReference type="ChEBI" id="CHEBI:58228"/>
    </ligand>
</feature>
<keyword id="KW-0056">Arginine metabolism</keyword>
<keyword id="KW-0963">Cytoplasm</keyword>
<keyword id="KW-0808">Transferase</keyword>
<accession>A7H345</accession>
<organism>
    <name type="scientific">Campylobacter jejuni subsp. doylei (strain ATCC BAA-1458 / RM4099 / 269.97)</name>
    <dbReference type="NCBI Taxonomy" id="360109"/>
    <lineage>
        <taxon>Bacteria</taxon>
        <taxon>Pseudomonadati</taxon>
        <taxon>Campylobacterota</taxon>
        <taxon>Epsilonproteobacteria</taxon>
        <taxon>Campylobacterales</taxon>
        <taxon>Campylobacteraceae</taxon>
        <taxon>Campylobacter</taxon>
    </lineage>
</organism>
<dbReference type="EC" id="2.1.3.3" evidence="2"/>
<dbReference type="EMBL" id="CP000768">
    <property type="protein sequence ID" value="ABS43632.1"/>
    <property type="molecule type" value="Genomic_DNA"/>
</dbReference>
<dbReference type="SMR" id="A7H345"/>
<dbReference type="KEGG" id="cjd:JJD26997_0795"/>
<dbReference type="HOGENOM" id="CLU_043846_3_2_7"/>
<dbReference type="UniPathway" id="UPA00254">
    <property type="reaction ID" value="UER00365"/>
</dbReference>
<dbReference type="Proteomes" id="UP000002302">
    <property type="component" value="Chromosome"/>
</dbReference>
<dbReference type="GO" id="GO:0005737">
    <property type="term" value="C:cytoplasm"/>
    <property type="evidence" value="ECO:0007669"/>
    <property type="project" value="UniProtKB-SubCell"/>
</dbReference>
<dbReference type="GO" id="GO:0016597">
    <property type="term" value="F:amino acid binding"/>
    <property type="evidence" value="ECO:0007669"/>
    <property type="project" value="InterPro"/>
</dbReference>
<dbReference type="GO" id="GO:0004585">
    <property type="term" value="F:ornithine carbamoyltransferase activity"/>
    <property type="evidence" value="ECO:0007669"/>
    <property type="project" value="UniProtKB-UniRule"/>
</dbReference>
<dbReference type="GO" id="GO:0042450">
    <property type="term" value="P:arginine biosynthetic process via ornithine"/>
    <property type="evidence" value="ECO:0007669"/>
    <property type="project" value="TreeGrafter"/>
</dbReference>
<dbReference type="GO" id="GO:0019547">
    <property type="term" value="P:arginine catabolic process to ornithine"/>
    <property type="evidence" value="ECO:0007669"/>
    <property type="project" value="UniProtKB-UniRule"/>
</dbReference>
<dbReference type="GO" id="GO:0019240">
    <property type="term" value="P:citrulline biosynthetic process"/>
    <property type="evidence" value="ECO:0007669"/>
    <property type="project" value="TreeGrafter"/>
</dbReference>
<dbReference type="FunFam" id="3.40.50.1370:FF:000008">
    <property type="entry name" value="Ornithine carbamoyltransferase"/>
    <property type="match status" value="1"/>
</dbReference>
<dbReference type="Gene3D" id="3.40.50.1370">
    <property type="entry name" value="Aspartate/ornithine carbamoyltransferase"/>
    <property type="match status" value="2"/>
</dbReference>
<dbReference type="HAMAP" id="MF_01109">
    <property type="entry name" value="OTCase"/>
    <property type="match status" value="1"/>
</dbReference>
<dbReference type="InterPro" id="IPR006132">
    <property type="entry name" value="Asp/Orn_carbamoyltranf_P-bd"/>
</dbReference>
<dbReference type="InterPro" id="IPR006130">
    <property type="entry name" value="Asp/Orn_carbamoylTrfase"/>
</dbReference>
<dbReference type="InterPro" id="IPR036901">
    <property type="entry name" value="Asp/Orn_carbamoylTrfase_sf"/>
</dbReference>
<dbReference type="InterPro" id="IPR006131">
    <property type="entry name" value="Asp_carbamoyltransf_Asp/Orn-bd"/>
</dbReference>
<dbReference type="InterPro" id="IPR002292">
    <property type="entry name" value="Orn/put_carbamltrans"/>
</dbReference>
<dbReference type="InterPro" id="IPR024904">
    <property type="entry name" value="OTCase_ArgI"/>
</dbReference>
<dbReference type="NCBIfam" id="TIGR00658">
    <property type="entry name" value="orni_carb_tr"/>
    <property type="match status" value="1"/>
</dbReference>
<dbReference type="NCBIfam" id="NF001986">
    <property type="entry name" value="PRK00779.1"/>
    <property type="match status" value="1"/>
</dbReference>
<dbReference type="PANTHER" id="PTHR45753">
    <property type="entry name" value="ORNITHINE CARBAMOYLTRANSFERASE, MITOCHONDRIAL"/>
    <property type="match status" value="1"/>
</dbReference>
<dbReference type="PANTHER" id="PTHR45753:SF3">
    <property type="entry name" value="ORNITHINE TRANSCARBAMYLASE, MITOCHONDRIAL"/>
    <property type="match status" value="1"/>
</dbReference>
<dbReference type="Pfam" id="PF00185">
    <property type="entry name" value="OTCace"/>
    <property type="match status" value="1"/>
</dbReference>
<dbReference type="Pfam" id="PF02729">
    <property type="entry name" value="OTCace_N"/>
    <property type="match status" value="1"/>
</dbReference>
<dbReference type="PRINTS" id="PR00100">
    <property type="entry name" value="AOTCASE"/>
</dbReference>
<dbReference type="PRINTS" id="PR00102">
    <property type="entry name" value="OTCASE"/>
</dbReference>
<dbReference type="SUPFAM" id="SSF53671">
    <property type="entry name" value="Aspartate/ornithine carbamoyltransferase"/>
    <property type="match status" value="1"/>
</dbReference>
<dbReference type="PROSITE" id="PS00097">
    <property type="entry name" value="CARBAMOYLTRANSFERASE"/>
    <property type="match status" value="1"/>
</dbReference>